<proteinExistence type="inferred from homology"/>
<feature type="chain" id="PRO_0000101286" description="5'-3' exonuclease">
    <location>
        <begin position="1"/>
        <end position="291"/>
    </location>
</feature>
<feature type="domain" description="5'-3' exonuclease" evidence="2">
    <location>
        <begin position="176"/>
        <end position="269"/>
    </location>
</feature>
<organism>
    <name type="scientific">Mycoplasma genitalium (strain ATCC 33530 / DSM 19775 / NCTC 10195 / G37)</name>
    <name type="common">Mycoplasmoides genitalium</name>
    <dbReference type="NCBI Taxonomy" id="243273"/>
    <lineage>
        <taxon>Bacteria</taxon>
        <taxon>Bacillati</taxon>
        <taxon>Mycoplasmatota</taxon>
        <taxon>Mycoplasmoidales</taxon>
        <taxon>Mycoplasmoidaceae</taxon>
        <taxon>Mycoplasmoides</taxon>
    </lineage>
</organism>
<protein>
    <recommendedName>
        <fullName>5'-3' exonuclease</fullName>
        <ecNumber>3.1.11.-</ecNumber>
    </recommendedName>
</protein>
<sequence>MKKAILIDGNSLAYRAYFATWKQVEYAKQNNLPFNNAIRTMLLMCWNLIKANVYQYGIVSFDTKAPTFRDQIYEGYKQKRVKTPVELLVQIPLIKQALVYLGFLVCEKDGFEADDLIGSYANLFTKQEITVDIYSSDRDMLQLVNAFTNVFLCIKGTKEMVMYNNENFKSLFYGLAPYQVVEYKGLVGDNSDNLAGIKGIGPIKGIELLQQYGTIDNIYTNFNNLPNQLQKLLNNQKEIAKTFSFLAKIKTDIELDQNIDLTGLKPIQKQALIQLLSENKINTLVEKFSKI</sequence>
<reference key="1">
    <citation type="journal article" date="1995" name="Science">
        <title>The minimal gene complement of Mycoplasma genitalium.</title>
        <authorList>
            <person name="Fraser C.M."/>
            <person name="Gocayne J.D."/>
            <person name="White O."/>
            <person name="Adams M.D."/>
            <person name="Clayton R.A."/>
            <person name="Fleischmann R.D."/>
            <person name="Bult C.J."/>
            <person name="Kerlavage A.R."/>
            <person name="Sutton G.G."/>
            <person name="Kelley J.M."/>
            <person name="Fritchman J.L."/>
            <person name="Weidman J.F."/>
            <person name="Small K.V."/>
            <person name="Sandusky M."/>
            <person name="Fuhrmann J.L."/>
            <person name="Nguyen D.T."/>
            <person name="Utterback T.R."/>
            <person name="Saudek D.M."/>
            <person name="Phillips C.A."/>
            <person name="Merrick J.M."/>
            <person name="Tomb J.-F."/>
            <person name="Dougherty B.A."/>
            <person name="Bott K.F."/>
            <person name="Hu P.-C."/>
            <person name="Lucier T.S."/>
            <person name="Peterson S.N."/>
            <person name="Smith H.O."/>
            <person name="Hutchison C.A. III"/>
            <person name="Venter J.C."/>
        </authorList>
    </citation>
    <scope>NUCLEOTIDE SEQUENCE [LARGE SCALE GENOMIC DNA]</scope>
    <source>
        <strain>ATCC 33530 / DSM 19775 / NCTC 10195 / G37</strain>
    </source>
</reference>
<gene>
    <name type="primary">polA</name>
    <name type="ordered locus">MG262</name>
</gene>
<name>EX53_MYCGE</name>
<keyword id="KW-0238">DNA-binding</keyword>
<keyword id="KW-0269">Exonuclease</keyword>
<keyword id="KW-0378">Hydrolase</keyword>
<keyword id="KW-0540">Nuclease</keyword>
<keyword id="KW-1185">Reference proteome</keyword>
<evidence type="ECO:0000250" key="1"/>
<evidence type="ECO:0000255" key="2"/>
<comment type="function">
    <text evidence="1">5'-3' exonuclease acting preferentially on double-stranded DNA.</text>
</comment>
<dbReference type="EC" id="3.1.11.-"/>
<dbReference type="EMBL" id="L43967">
    <property type="protein sequence ID" value="AAC71483.1"/>
    <property type="molecule type" value="Genomic_DNA"/>
</dbReference>
<dbReference type="PIR" id="I64228">
    <property type="entry name" value="I64228"/>
</dbReference>
<dbReference type="RefSeq" id="WP_010869399.1">
    <property type="nucleotide sequence ID" value="NC_000908.2"/>
</dbReference>
<dbReference type="SMR" id="Q49406"/>
<dbReference type="FunCoup" id="Q49406">
    <property type="interactions" value="45"/>
</dbReference>
<dbReference type="STRING" id="243273.MG_262"/>
<dbReference type="GeneID" id="88282416"/>
<dbReference type="KEGG" id="mge:MG_262"/>
<dbReference type="eggNOG" id="COG0258">
    <property type="taxonomic scope" value="Bacteria"/>
</dbReference>
<dbReference type="HOGENOM" id="CLU_004675_1_5_14"/>
<dbReference type="InParanoid" id="Q49406"/>
<dbReference type="OrthoDB" id="9806424at2"/>
<dbReference type="BioCyc" id="MGEN243273:G1GJ2-317-MONOMER"/>
<dbReference type="Proteomes" id="UP000000807">
    <property type="component" value="Chromosome"/>
</dbReference>
<dbReference type="GO" id="GO:0008409">
    <property type="term" value="F:5'-3' exonuclease activity"/>
    <property type="evidence" value="ECO:0007669"/>
    <property type="project" value="InterPro"/>
</dbReference>
<dbReference type="GO" id="GO:0017108">
    <property type="term" value="F:5'-flap endonuclease activity"/>
    <property type="evidence" value="ECO:0007669"/>
    <property type="project" value="InterPro"/>
</dbReference>
<dbReference type="GO" id="GO:0003677">
    <property type="term" value="F:DNA binding"/>
    <property type="evidence" value="ECO:0007669"/>
    <property type="project" value="UniProtKB-KW"/>
</dbReference>
<dbReference type="GO" id="GO:0033567">
    <property type="term" value="P:DNA replication, Okazaki fragment processing"/>
    <property type="evidence" value="ECO:0007669"/>
    <property type="project" value="InterPro"/>
</dbReference>
<dbReference type="CDD" id="cd09898">
    <property type="entry name" value="H3TH_53EXO"/>
    <property type="match status" value="1"/>
</dbReference>
<dbReference type="CDD" id="cd09859">
    <property type="entry name" value="PIN_53EXO"/>
    <property type="match status" value="1"/>
</dbReference>
<dbReference type="FunFam" id="1.10.150.20:FF:000003">
    <property type="entry name" value="DNA polymerase I"/>
    <property type="match status" value="1"/>
</dbReference>
<dbReference type="Gene3D" id="1.10.150.20">
    <property type="entry name" value="5' to 3' exonuclease, C-terminal subdomain"/>
    <property type="match status" value="1"/>
</dbReference>
<dbReference type="Gene3D" id="3.40.50.1010">
    <property type="entry name" value="5'-nuclease"/>
    <property type="match status" value="1"/>
</dbReference>
<dbReference type="InterPro" id="IPR020046">
    <property type="entry name" value="5-3_exonucl_a-hlix_arch_N"/>
</dbReference>
<dbReference type="InterPro" id="IPR002421">
    <property type="entry name" value="5-3_exonuclease"/>
</dbReference>
<dbReference type="InterPro" id="IPR036279">
    <property type="entry name" value="5-3_exonuclease_C_sf"/>
</dbReference>
<dbReference type="InterPro" id="IPR020045">
    <property type="entry name" value="DNA_polI_H3TH"/>
</dbReference>
<dbReference type="InterPro" id="IPR038969">
    <property type="entry name" value="FEN"/>
</dbReference>
<dbReference type="InterPro" id="IPR008918">
    <property type="entry name" value="HhH2"/>
</dbReference>
<dbReference type="InterPro" id="IPR029060">
    <property type="entry name" value="PIN-like_dom_sf"/>
</dbReference>
<dbReference type="NCBIfam" id="NF011547">
    <property type="entry name" value="PRK14976.1-4"/>
    <property type="match status" value="1"/>
</dbReference>
<dbReference type="PANTHER" id="PTHR42646:SF2">
    <property type="entry name" value="5'-3' EXONUCLEASE FAMILY PROTEIN"/>
    <property type="match status" value="1"/>
</dbReference>
<dbReference type="PANTHER" id="PTHR42646">
    <property type="entry name" value="FLAP ENDONUCLEASE XNI"/>
    <property type="match status" value="1"/>
</dbReference>
<dbReference type="Pfam" id="PF01367">
    <property type="entry name" value="5_3_exonuc"/>
    <property type="match status" value="1"/>
</dbReference>
<dbReference type="Pfam" id="PF02739">
    <property type="entry name" value="5_3_exonuc_N"/>
    <property type="match status" value="1"/>
</dbReference>
<dbReference type="SMART" id="SM00475">
    <property type="entry name" value="53EXOc"/>
    <property type="match status" value="1"/>
</dbReference>
<dbReference type="SMART" id="SM00279">
    <property type="entry name" value="HhH2"/>
    <property type="match status" value="1"/>
</dbReference>
<dbReference type="SUPFAM" id="SSF47807">
    <property type="entry name" value="5' to 3' exonuclease, C-terminal subdomain"/>
    <property type="match status" value="1"/>
</dbReference>
<dbReference type="SUPFAM" id="SSF88723">
    <property type="entry name" value="PIN domain-like"/>
    <property type="match status" value="1"/>
</dbReference>
<accession>Q49406</accession>